<accession>Q2RPE1</accession>
<sequence>MPDLSLERACGGRVAGVDEVGRGPLAGPVVAAAVVIDAGRADPALLARLDDSKKLSAALRQRLATALLADPGVEVGLGEASVAEIDRINILQATFLAMGRALAKLAPPVDLALVDGNRLPPLPCPGQAVVRGDGLSLSIAAASIVAKVHRDAAMATLAQALPGYGWERNAGYGTAEHLAALDRLGATPHHRASFAPVREALARSALPGHKCVTALTFS</sequence>
<evidence type="ECO:0000255" key="1">
    <source>
        <dbReference type="HAMAP-Rule" id="MF_00052"/>
    </source>
</evidence>
<evidence type="ECO:0000255" key="2">
    <source>
        <dbReference type="PROSITE-ProRule" id="PRU01319"/>
    </source>
</evidence>
<gene>
    <name evidence="1" type="primary">rnhB</name>
    <name type="ordered locus">Rru_A3209</name>
</gene>
<name>RNH2_RHORT</name>
<reference key="1">
    <citation type="journal article" date="2011" name="Stand. Genomic Sci.">
        <title>Complete genome sequence of Rhodospirillum rubrum type strain (S1).</title>
        <authorList>
            <person name="Munk A.C."/>
            <person name="Copeland A."/>
            <person name="Lucas S."/>
            <person name="Lapidus A."/>
            <person name="Del Rio T.G."/>
            <person name="Barry K."/>
            <person name="Detter J.C."/>
            <person name="Hammon N."/>
            <person name="Israni S."/>
            <person name="Pitluck S."/>
            <person name="Brettin T."/>
            <person name="Bruce D."/>
            <person name="Han C."/>
            <person name="Tapia R."/>
            <person name="Gilna P."/>
            <person name="Schmutz J."/>
            <person name="Larimer F."/>
            <person name="Land M."/>
            <person name="Kyrpides N.C."/>
            <person name="Mavromatis K."/>
            <person name="Richardson P."/>
            <person name="Rohde M."/>
            <person name="Goeker M."/>
            <person name="Klenk H.P."/>
            <person name="Zhang Y."/>
            <person name="Roberts G.P."/>
            <person name="Reslewic S."/>
            <person name="Schwartz D.C."/>
        </authorList>
    </citation>
    <scope>NUCLEOTIDE SEQUENCE [LARGE SCALE GENOMIC DNA]</scope>
    <source>
        <strain>ATCC 11170 / ATH 1.1.1 / DSM 467 / LMG 4362 / NCIMB 8255 / S1</strain>
    </source>
</reference>
<keyword id="KW-0963">Cytoplasm</keyword>
<keyword id="KW-0255">Endonuclease</keyword>
<keyword id="KW-0378">Hydrolase</keyword>
<keyword id="KW-0464">Manganese</keyword>
<keyword id="KW-0479">Metal-binding</keyword>
<keyword id="KW-0540">Nuclease</keyword>
<keyword id="KW-1185">Reference proteome</keyword>
<organism>
    <name type="scientific">Rhodospirillum rubrum (strain ATCC 11170 / ATH 1.1.1 / DSM 467 / LMG 4362 / NCIMB 8255 / S1)</name>
    <dbReference type="NCBI Taxonomy" id="269796"/>
    <lineage>
        <taxon>Bacteria</taxon>
        <taxon>Pseudomonadati</taxon>
        <taxon>Pseudomonadota</taxon>
        <taxon>Alphaproteobacteria</taxon>
        <taxon>Rhodospirillales</taxon>
        <taxon>Rhodospirillaceae</taxon>
        <taxon>Rhodospirillum</taxon>
    </lineage>
</organism>
<protein>
    <recommendedName>
        <fullName evidence="1">Ribonuclease HII</fullName>
        <shortName evidence="1">RNase HII</shortName>
        <ecNumber evidence="1">3.1.26.4</ecNumber>
    </recommendedName>
</protein>
<proteinExistence type="inferred from homology"/>
<feature type="chain" id="PRO_0000235761" description="Ribonuclease HII">
    <location>
        <begin position="1"/>
        <end position="218"/>
    </location>
</feature>
<feature type="domain" description="RNase H type-2" evidence="2">
    <location>
        <begin position="12"/>
        <end position="206"/>
    </location>
</feature>
<feature type="binding site" evidence="1">
    <location>
        <position position="18"/>
    </location>
    <ligand>
        <name>a divalent metal cation</name>
        <dbReference type="ChEBI" id="CHEBI:60240"/>
    </ligand>
</feature>
<feature type="binding site" evidence="1">
    <location>
        <position position="19"/>
    </location>
    <ligand>
        <name>a divalent metal cation</name>
        <dbReference type="ChEBI" id="CHEBI:60240"/>
    </ligand>
</feature>
<feature type="binding site" evidence="1">
    <location>
        <position position="115"/>
    </location>
    <ligand>
        <name>a divalent metal cation</name>
        <dbReference type="ChEBI" id="CHEBI:60240"/>
    </ligand>
</feature>
<dbReference type="EC" id="3.1.26.4" evidence="1"/>
<dbReference type="EMBL" id="CP000230">
    <property type="protein sequence ID" value="ABC24004.1"/>
    <property type="molecule type" value="Genomic_DNA"/>
</dbReference>
<dbReference type="RefSeq" id="WP_011390957.1">
    <property type="nucleotide sequence ID" value="NC_007643.1"/>
</dbReference>
<dbReference type="RefSeq" id="YP_428291.1">
    <property type="nucleotide sequence ID" value="NC_007643.1"/>
</dbReference>
<dbReference type="SMR" id="Q2RPE1"/>
<dbReference type="STRING" id="269796.Rru_A3209"/>
<dbReference type="EnsemblBacteria" id="ABC24004">
    <property type="protein sequence ID" value="ABC24004"/>
    <property type="gene ID" value="Rru_A3209"/>
</dbReference>
<dbReference type="KEGG" id="rru:Rru_A3209"/>
<dbReference type="PATRIC" id="fig|269796.9.peg.3323"/>
<dbReference type="eggNOG" id="COG0164">
    <property type="taxonomic scope" value="Bacteria"/>
</dbReference>
<dbReference type="HOGENOM" id="CLU_036532_3_2_5"/>
<dbReference type="PhylomeDB" id="Q2RPE1"/>
<dbReference type="Proteomes" id="UP000001929">
    <property type="component" value="Chromosome"/>
</dbReference>
<dbReference type="GO" id="GO:0005737">
    <property type="term" value="C:cytoplasm"/>
    <property type="evidence" value="ECO:0007669"/>
    <property type="project" value="UniProtKB-SubCell"/>
</dbReference>
<dbReference type="GO" id="GO:0032299">
    <property type="term" value="C:ribonuclease H2 complex"/>
    <property type="evidence" value="ECO:0007669"/>
    <property type="project" value="TreeGrafter"/>
</dbReference>
<dbReference type="GO" id="GO:0030145">
    <property type="term" value="F:manganese ion binding"/>
    <property type="evidence" value="ECO:0007669"/>
    <property type="project" value="UniProtKB-UniRule"/>
</dbReference>
<dbReference type="GO" id="GO:0003723">
    <property type="term" value="F:RNA binding"/>
    <property type="evidence" value="ECO:0007669"/>
    <property type="project" value="InterPro"/>
</dbReference>
<dbReference type="GO" id="GO:0004523">
    <property type="term" value="F:RNA-DNA hybrid ribonuclease activity"/>
    <property type="evidence" value="ECO:0007669"/>
    <property type="project" value="UniProtKB-UniRule"/>
</dbReference>
<dbReference type="GO" id="GO:0043137">
    <property type="term" value="P:DNA replication, removal of RNA primer"/>
    <property type="evidence" value="ECO:0007669"/>
    <property type="project" value="TreeGrafter"/>
</dbReference>
<dbReference type="GO" id="GO:0006298">
    <property type="term" value="P:mismatch repair"/>
    <property type="evidence" value="ECO:0007669"/>
    <property type="project" value="TreeGrafter"/>
</dbReference>
<dbReference type="CDD" id="cd07182">
    <property type="entry name" value="RNase_HII_bacteria_HII_like"/>
    <property type="match status" value="1"/>
</dbReference>
<dbReference type="Gene3D" id="3.30.420.10">
    <property type="entry name" value="Ribonuclease H-like superfamily/Ribonuclease H"/>
    <property type="match status" value="1"/>
</dbReference>
<dbReference type="HAMAP" id="MF_00052_B">
    <property type="entry name" value="RNase_HII_B"/>
    <property type="match status" value="1"/>
</dbReference>
<dbReference type="InterPro" id="IPR022898">
    <property type="entry name" value="RNase_HII"/>
</dbReference>
<dbReference type="InterPro" id="IPR001352">
    <property type="entry name" value="RNase_HII/HIII"/>
</dbReference>
<dbReference type="InterPro" id="IPR024567">
    <property type="entry name" value="RNase_HII/HIII_dom"/>
</dbReference>
<dbReference type="InterPro" id="IPR012337">
    <property type="entry name" value="RNaseH-like_sf"/>
</dbReference>
<dbReference type="InterPro" id="IPR036397">
    <property type="entry name" value="RNaseH_sf"/>
</dbReference>
<dbReference type="NCBIfam" id="NF000595">
    <property type="entry name" value="PRK00015.1-3"/>
    <property type="match status" value="1"/>
</dbReference>
<dbReference type="PANTHER" id="PTHR10954">
    <property type="entry name" value="RIBONUCLEASE H2 SUBUNIT A"/>
    <property type="match status" value="1"/>
</dbReference>
<dbReference type="PANTHER" id="PTHR10954:SF18">
    <property type="entry name" value="RIBONUCLEASE HII"/>
    <property type="match status" value="1"/>
</dbReference>
<dbReference type="Pfam" id="PF01351">
    <property type="entry name" value="RNase_HII"/>
    <property type="match status" value="1"/>
</dbReference>
<dbReference type="SUPFAM" id="SSF53098">
    <property type="entry name" value="Ribonuclease H-like"/>
    <property type="match status" value="1"/>
</dbReference>
<dbReference type="PROSITE" id="PS51975">
    <property type="entry name" value="RNASE_H_2"/>
    <property type="match status" value="1"/>
</dbReference>
<comment type="function">
    <text evidence="1">Endonuclease that specifically degrades the RNA of RNA-DNA hybrids.</text>
</comment>
<comment type="catalytic activity">
    <reaction evidence="1">
        <text>Endonucleolytic cleavage to 5'-phosphomonoester.</text>
        <dbReference type="EC" id="3.1.26.4"/>
    </reaction>
</comment>
<comment type="cofactor">
    <cofactor evidence="1">
        <name>Mn(2+)</name>
        <dbReference type="ChEBI" id="CHEBI:29035"/>
    </cofactor>
    <cofactor evidence="1">
        <name>Mg(2+)</name>
        <dbReference type="ChEBI" id="CHEBI:18420"/>
    </cofactor>
    <text evidence="1">Manganese or magnesium. Binds 1 divalent metal ion per monomer in the absence of substrate. May bind a second metal ion after substrate binding.</text>
</comment>
<comment type="subcellular location">
    <subcellularLocation>
        <location evidence="1">Cytoplasm</location>
    </subcellularLocation>
</comment>
<comment type="similarity">
    <text evidence="1">Belongs to the RNase HII family.</text>
</comment>